<comment type="function">
    <text evidence="1">Prenyltransferase that catalyzes the transfer of the geranylgeranyl moiety of geranylgeranyl diphosphate (GGPP) to the C3 hydroxyl of sn-glycerol-1-phosphate (G1P). This reaction is the first ether-bond-formation step in the biosynthesis of archaeal membrane lipids.</text>
</comment>
<comment type="catalytic activity">
    <reaction evidence="1">
        <text>sn-glycerol 1-phosphate + (2E,6E,10E)-geranylgeranyl diphosphate = sn-3-O-(geranylgeranyl)glycerol 1-phosphate + diphosphate</text>
        <dbReference type="Rhea" id="RHEA:23404"/>
        <dbReference type="ChEBI" id="CHEBI:33019"/>
        <dbReference type="ChEBI" id="CHEBI:57677"/>
        <dbReference type="ChEBI" id="CHEBI:57685"/>
        <dbReference type="ChEBI" id="CHEBI:58756"/>
        <dbReference type="EC" id="2.5.1.41"/>
    </reaction>
</comment>
<comment type="cofactor">
    <cofactor evidence="1">
        <name>Mg(2+)</name>
        <dbReference type="ChEBI" id="CHEBI:18420"/>
    </cofactor>
</comment>
<comment type="pathway">
    <text evidence="1">Membrane lipid metabolism; glycerophospholipid metabolism.</text>
</comment>
<comment type="subcellular location">
    <subcellularLocation>
        <location evidence="1">Cytoplasm</location>
    </subcellularLocation>
</comment>
<comment type="similarity">
    <text evidence="1">Belongs to the GGGP/HepGP synthase family. Group II subfamily.</text>
</comment>
<keyword id="KW-0963">Cytoplasm</keyword>
<keyword id="KW-0444">Lipid biosynthesis</keyword>
<keyword id="KW-0443">Lipid metabolism</keyword>
<keyword id="KW-0460">Magnesium</keyword>
<keyword id="KW-0479">Metal-binding</keyword>
<keyword id="KW-0594">Phospholipid biosynthesis</keyword>
<keyword id="KW-1208">Phospholipid metabolism</keyword>
<keyword id="KW-1185">Reference proteome</keyword>
<keyword id="KW-0808">Transferase</keyword>
<organism>
    <name type="scientific">Sulfurisphaera tokodaii (strain DSM 16993 / JCM 10545 / NBRC 100140 / 7)</name>
    <name type="common">Sulfolobus tokodaii</name>
    <dbReference type="NCBI Taxonomy" id="273063"/>
    <lineage>
        <taxon>Archaea</taxon>
        <taxon>Thermoproteota</taxon>
        <taxon>Thermoprotei</taxon>
        <taxon>Sulfolobales</taxon>
        <taxon>Sulfolobaceae</taxon>
        <taxon>Sulfurisphaera</taxon>
    </lineage>
</organism>
<proteinExistence type="inferred from homology"/>
<protein>
    <recommendedName>
        <fullName evidence="1">Geranylgeranylglyceryl phosphate synthase</fullName>
        <shortName evidence="1">GGGP synthase</shortName>
        <shortName evidence="1">GGGPS</shortName>
        <ecNumber evidence="1">2.5.1.41</ecNumber>
    </recommendedName>
    <alternativeName>
        <fullName evidence="1">(S)-3-O-geranylgeranylglyceryl phosphate synthase</fullName>
    </alternativeName>
    <alternativeName>
        <fullName evidence="1">Phosphoglycerol geranylgeranyltransferase</fullName>
    </alternativeName>
</protein>
<sequence length="244" mass="26640">MRKIIQEKLNEGKVLHFSLFDPDKVDLESIYSIALKLVESGTSGFLIGGTLGVSKEKLDSIIEILEDFEVPKIIFPSNVNLITEKADAILFMSLLNSDDIYYITGAQLIAAPIIKKLKLESLPTGYIIVGHGGTAAHVGKARVIPYDNIELIVAYSIMAELFGMDFVYLEAGSGAPEPIRPSVISITKKYLENSKIIVGGGIRNEEIAKELALAGADIIVTGNIIEQNLEKALKIVKEISNIRR</sequence>
<gene>
    <name type="ordered locus">STK_03100</name>
</gene>
<evidence type="ECO:0000255" key="1">
    <source>
        <dbReference type="HAMAP-Rule" id="MF_00112"/>
    </source>
</evidence>
<feature type="chain" id="PRO_0000138745" description="Geranylgeranylglyceryl phosphate synthase">
    <location>
        <begin position="1"/>
        <end position="244"/>
    </location>
</feature>
<feature type="binding site" evidence="1">
    <location>
        <position position="21"/>
    </location>
    <ligand>
        <name>Mg(2+)</name>
        <dbReference type="ChEBI" id="CHEBI:18420"/>
    </ligand>
</feature>
<feature type="binding site" evidence="1">
    <location>
        <position position="50"/>
    </location>
    <ligand>
        <name>Mg(2+)</name>
        <dbReference type="ChEBI" id="CHEBI:18420"/>
    </ligand>
</feature>
<feature type="binding site" evidence="1">
    <location>
        <begin position="168"/>
        <end position="174"/>
    </location>
    <ligand>
        <name>sn-glycerol 1-phosphate</name>
        <dbReference type="ChEBI" id="CHEBI:57685"/>
    </ligand>
</feature>
<feature type="binding site" evidence="1">
    <location>
        <begin position="200"/>
        <end position="201"/>
    </location>
    <ligand>
        <name>sn-glycerol 1-phosphate</name>
        <dbReference type="ChEBI" id="CHEBI:57685"/>
    </ligand>
</feature>
<feature type="binding site" evidence="1">
    <location>
        <begin position="222"/>
        <end position="223"/>
    </location>
    <ligand>
        <name>sn-glycerol 1-phosphate</name>
        <dbReference type="ChEBI" id="CHEBI:57685"/>
    </ligand>
</feature>
<dbReference type="EC" id="2.5.1.41" evidence="1"/>
<dbReference type="EMBL" id="BA000023">
    <property type="protein sequence ID" value="BAK54230.1"/>
    <property type="molecule type" value="Genomic_DNA"/>
</dbReference>
<dbReference type="SMR" id="Q975W8"/>
<dbReference type="STRING" id="273063.STK_03100"/>
<dbReference type="KEGG" id="sto:STK_03100"/>
<dbReference type="PATRIC" id="fig|273063.9.peg.361"/>
<dbReference type="eggNOG" id="arCOG01085">
    <property type="taxonomic scope" value="Archaea"/>
</dbReference>
<dbReference type="UniPathway" id="UPA00940"/>
<dbReference type="Proteomes" id="UP000001015">
    <property type="component" value="Chromosome"/>
</dbReference>
<dbReference type="GO" id="GO:0005737">
    <property type="term" value="C:cytoplasm"/>
    <property type="evidence" value="ECO:0007669"/>
    <property type="project" value="UniProtKB-SubCell"/>
</dbReference>
<dbReference type="GO" id="GO:0000287">
    <property type="term" value="F:magnesium ion binding"/>
    <property type="evidence" value="ECO:0007669"/>
    <property type="project" value="UniProtKB-UniRule"/>
</dbReference>
<dbReference type="GO" id="GO:0047294">
    <property type="term" value="F:phosphoglycerol geranylgeranyltransferase activity"/>
    <property type="evidence" value="ECO:0007669"/>
    <property type="project" value="UniProtKB-UniRule"/>
</dbReference>
<dbReference type="GO" id="GO:0046474">
    <property type="term" value="P:glycerophospholipid biosynthetic process"/>
    <property type="evidence" value="ECO:0007669"/>
    <property type="project" value="UniProtKB-UniRule"/>
</dbReference>
<dbReference type="CDD" id="cd02812">
    <property type="entry name" value="PcrB_like"/>
    <property type="match status" value="1"/>
</dbReference>
<dbReference type="FunFam" id="3.20.20.390:FF:000001">
    <property type="entry name" value="Heptaprenylglyceryl phosphate synthase"/>
    <property type="match status" value="1"/>
</dbReference>
<dbReference type="Gene3D" id="3.20.20.390">
    <property type="entry name" value="FMN-linked oxidoreductases"/>
    <property type="match status" value="1"/>
</dbReference>
<dbReference type="HAMAP" id="MF_00112">
    <property type="entry name" value="GGGP_HepGP_synthase"/>
    <property type="match status" value="1"/>
</dbReference>
<dbReference type="InterPro" id="IPR039074">
    <property type="entry name" value="GGGP/HepGP_synthase_I"/>
</dbReference>
<dbReference type="InterPro" id="IPR038597">
    <property type="entry name" value="GGGP/HepGP_synthase_sf"/>
</dbReference>
<dbReference type="InterPro" id="IPR008205">
    <property type="entry name" value="GGGP_HepGP_synthase"/>
</dbReference>
<dbReference type="InterPro" id="IPR010946">
    <property type="entry name" value="GGGP_synth"/>
</dbReference>
<dbReference type="NCBIfam" id="TIGR01769">
    <property type="entry name" value="GGGP"/>
    <property type="match status" value="1"/>
</dbReference>
<dbReference type="NCBIfam" id="TIGR01768">
    <property type="entry name" value="GGGP-family"/>
    <property type="match status" value="1"/>
</dbReference>
<dbReference type="NCBIfam" id="NF003198">
    <property type="entry name" value="PRK04169.1-2"/>
    <property type="match status" value="1"/>
</dbReference>
<dbReference type="NCBIfam" id="NF003202">
    <property type="entry name" value="PRK04169.1-6"/>
    <property type="match status" value="1"/>
</dbReference>
<dbReference type="PANTHER" id="PTHR40029">
    <property type="match status" value="1"/>
</dbReference>
<dbReference type="PANTHER" id="PTHR40029:SF2">
    <property type="entry name" value="HEPTAPRENYLGLYCERYL PHOSPHATE SYNTHASE"/>
    <property type="match status" value="1"/>
</dbReference>
<dbReference type="Pfam" id="PF01884">
    <property type="entry name" value="PcrB"/>
    <property type="match status" value="1"/>
</dbReference>
<dbReference type="SUPFAM" id="SSF51395">
    <property type="entry name" value="FMN-linked oxidoreductases"/>
    <property type="match status" value="1"/>
</dbReference>
<accession>Q975W8</accession>
<accession>F9VMT4</accession>
<reference key="1">
    <citation type="journal article" date="2001" name="DNA Res.">
        <title>Complete genome sequence of an aerobic thermoacidophilic Crenarchaeon, Sulfolobus tokodaii strain7.</title>
        <authorList>
            <person name="Kawarabayasi Y."/>
            <person name="Hino Y."/>
            <person name="Horikawa H."/>
            <person name="Jin-no K."/>
            <person name="Takahashi M."/>
            <person name="Sekine M."/>
            <person name="Baba S."/>
            <person name="Ankai A."/>
            <person name="Kosugi H."/>
            <person name="Hosoyama A."/>
            <person name="Fukui S."/>
            <person name="Nagai Y."/>
            <person name="Nishijima K."/>
            <person name="Otsuka R."/>
            <person name="Nakazawa H."/>
            <person name="Takamiya M."/>
            <person name="Kato Y."/>
            <person name="Yoshizawa T."/>
            <person name="Tanaka T."/>
            <person name="Kudoh Y."/>
            <person name="Yamazaki J."/>
            <person name="Kushida N."/>
            <person name="Oguchi A."/>
            <person name="Aoki K."/>
            <person name="Masuda S."/>
            <person name="Yanagii M."/>
            <person name="Nishimura M."/>
            <person name="Yamagishi A."/>
            <person name="Oshima T."/>
            <person name="Kikuchi H."/>
        </authorList>
    </citation>
    <scope>NUCLEOTIDE SEQUENCE [LARGE SCALE GENOMIC DNA]</scope>
    <source>
        <strain>DSM 16993 / JCM 10545 / NBRC 100140 / 7</strain>
    </source>
</reference>
<name>GGGPS_SULTO</name>